<feature type="signal peptide" evidence="4 5">
    <location>
        <begin position="1"/>
        <end position="16"/>
    </location>
</feature>
<feature type="chain" id="PRO_0000419082" description="Basic phospholipase A2 homolog CTs-K49a" evidence="8 9">
    <location>
        <begin position="17"/>
        <end position="138"/>
    </location>
</feature>
<feature type="region of interest" description="Important for membrane-damaging activities in eukaryotes and bacteria; heparin-binding" evidence="2">
    <location>
        <begin position="121"/>
        <end position="133"/>
    </location>
</feature>
<feature type="site" description="Important residue of the cationic membrane-docking site (MDoS)" evidence="1">
    <location>
        <position position="121"/>
    </location>
</feature>
<feature type="site" description="Important residue of the cationic membrane-docking site (MDoS)" evidence="1">
    <location>
        <position position="124"/>
    </location>
</feature>
<feature type="site" description="Hydrophobic membrane-disruption site (MDiS)" evidence="1">
    <location>
        <position position="127"/>
    </location>
</feature>
<feature type="site" description="Cationic membrane-docking site (MDoS)" evidence="1">
    <location>
        <position position="128"/>
    </location>
</feature>
<feature type="site" description="Hydrophobic membrane-disruption site (MDiS)" evidence="1">
    <location>
        <position position="130"/>
    </location>
</feature>
<feature type="site" description="Cationic membrane-docking site (MDoS)" evidence="1">
    <location>
        <position position="133"/>
    </location>
</feature>
<feature type="disulfide bond" evidence="3">
    <location>
        <begin position="42"/>
        <end position="131"/>
    </location>
</feature>
<feature type="disulfide bond" evidence="3">
    <location>
        <begin position="44"/>
        <end position="60"/>
    </location>
</feature>
<feature type="disulfide bond" evidence="3">
    <location>
        <begin position="59"/>
        <end position="111"/>
    </location>
</feature>
<feature type="disulfide bond" evidence="3">
    <location>
        <begin position="65"/>
        <end position="138"/>
    </location>
</feature>
<feature type="disulfide bond" evidence="3">
    <location>
        <begin position="66"/>
        <end position="104"/>
    </location>
</feature>
<feature type="disulfide bond" evidence="3">
    <location>
        <begin position="91"/>
        <end position="102"/>
    </location>
</feature>
<name>PA2HI_TRIST</name>
<dbReference type="EMBL" id="AY211934">
    <property type="protein sequence ID" value="AAP48892.1"/>
    <property type="molecule type" value="mRNA"/>
</dbReference>
<dbReference type="SMR" id="Q6H3D5"/>
<dbReference type="GO" id="GO:0005576">
    <property type="term" value="C:extracellular region"/>
    <property type="evidence" value="ECO:0007669"/>
    <property type="project" value="UniProtKB-SubCell"/>
</dbReference>
<dbReference type="GO" id="GO:0005509">
    <property type="term" value="F:calcium ion binding"/>
    <property type="evidence" value="ECO:0007669"/>
    <property type="project" value="InterPro"/>
</dbReference>
<dbReference type="GO" id="GO:0047498">
    <property type="term" value="F:calcium-dependent phospholipase A2 activity"/>
    <property type="evidence" value="ECO:0007669"/>
    <property type="project" value="TreeGrafter"/>
</dbReference>
<dbReference type="GO" id="GO:0005543">
    <property type="term" value="F:phospholipid binding"/>
    <property type="evidence" value="ECO:0007669"/>
    <property type="project" value="TreeGrafter"/>
</dbReference>
<dbReference type="GO" id="GO:0090729">
    <property type="term" value="F:toxin activity"/>
    <property type="evidence" value="ECO:0007669"/>
    <property type="project" value="UniProtKB-KW"/>
</dbReference>
<dbReference type="GO" id="GO:0050482">
    <property type="term" value="P:arachidonate secretion"/>
    <property type="evidence" value="ECO:0007669"/>
    <property type="project" value="InterPro"/>
</dbReference>
<dbReference type="GO" id="GO:0016042">
    <property type="term" value="P:lipid catabolic process"/>
    <property type="evidence" value="ECO:0007669"/>
    <property type="project" value="InterPro"/>
</dbReference>
<dbReference type="GO" id="GO:0042130">
    <property type="term" value="P:negative regulation of T cell proliferation"/>
    <property type="evidence" value="ECO:0007669"/>
    <property type="project" value="TreeGrafter"/>
</dbReference>
<dbReference type="GO" id="GO:0006644">
    <property type="term" value="P:phospholipid metabolic process"/>
    <property type="evidence" value="ECO:0007669"/>
    <property type="project" value="InterPro"/>
</dbReference>
<dbReference type="CDD" id="cd00125">
    <property type="entry name" value="PLA2c"/>
    <property type="match status" value="1"/>
</dbReference>
<dbReference type="FunFam" id="1.20.90.10:FF:000001">
    <property type="entry name" value="Basic phospholipase A2 homolog"/>
    <property type="match status" value="1"/>
</dbReference>
<dbReference type="Gene3D" id="1.20.90.10">
    <property type="entry name" value="Phospholipase A2 domain"/>
    <property type="match status" value="1"/>
</dbReference>
<dbReference type="InterPro" id="IPR001211">
    <property type="entry name" value="PLipase_A2"/>
</dbReference>
<dbReference type="InterPro" id="IPR033112">
    <property type="entry name" value="PLipase_A2_Asp_AS"/>
</dbReference>
<dbReference type="InterPro" id="IPR016090">
    <property type="entry name" value="PLipase_A2_dom"/>
</dbReference>
<dbReference type="InterPro" id="IPR036444">
    <property type="entry name" value="PLipase_A2_dom_sf"/>
</dbReference>
<dbReference type="InterPro" id="IPR033113">
    <property type="entry name" value="PLipase_A2_His_AS"/>
</dbReference>
<dbReference type="PANTHER" id="PTHR11716">
    <property type="entry name" value="PHOSPHOLIPASE A2 FAMILY MEMBER"/>
    <property type="match status" value="1"/>
</dbReference>
<dbReference type="PANTHER" id="PTHR11716:SF9">
    <property type="entry name" value="PHOSPHOLIPASE A2, MEMBRANE ASSOCIATED"/>
    <property type="match status" value="1"/>
</dbReference>
<dbReference type="Pfam" id="PF00068">
    <property type="entry name" value="Phospholip_A2_1"/>
    <property type="match status" value="1"/>
</dbReference>
<dbReference type="PRINTS" id="PR00389">
    <property type="entry name" value="PHPHLIPASEA2"/>
</dbReference>
<dbReference type="SMART" id="SM00085">
    <property type="entry name" value="PA2c"/>
    <property type="match status" value="1"/>
</dbReference>
<dbReference type="SUPFAM" id="SSF48619">
    <property type="entry name" value="Phospholipase A2, PLA2"/>
    <property type="match status" value="1"/>
</dbReference>
<dbReference type="PROSITE" id="PS00119">
    <property type="entry name" value="PA2_ASP"/>
    <property type="match status" value="1"/>
</dbReference>
<dbReference type="PROSITE" id="PS00118">
    <property type="entry name" value="PA2_HIS"/>
    <property type="match status" value="1"/>
</dbReference>
<sequence>MRTLWIMAVLLVVVEGSLVQLGKMIFQETGKNPATSYGLYGCNCGPGGRRKPKDATDRCCFLHKCCYKKLTDCDPIKDSYSYSWVNKAIVCGGDDPHLKEMCECDKAMAICFRENLDTYDKKKKINLKLFCKKTSEQC</sequence>
<proteinExistence type="evidence at protein level"/>
<evidence type="ECO:0000250" key="1">
    <source>
        <dbReference type="UniProtKB" id="I6L8L6"/>
    </source>
</evidence>
<evidence type="ECO:0000250" key="2">
    <source>
        <dbReference type="UniProtKB" id="P24605"/>
    </source>
</evidence>
<evidence type="ECO:0000250" key="3">
    <source>
        <dbReference type="UniProtKB" id="Q90249"/>
    </source>
</evidence>
<evidence type="ECO:0000269" key="4">
    <source>
    </source>
</evidence>
<evidence type="ECO:0000269" key="5">
    <source ref="2"/>
</evidence>
<evidence type="ECO:0000303" key="6">
    <source>
    </source>
</evidence>
<evidence type="ECO:0000305" key="7"/>
<evidence type="ECO:0000305" key="8">
    <source>
    </source>
</evidence>
<evidence type="ECO:0000305" key="9">
    <source ref="2"/>
</evidence>
<organism>
    <name type="scientific">Trimeresurus stejnegeri</name>
    <name type="common">Chinese green tree viper</name>
    <name type="synonym">Viridovipera stejnegeri</name>
    <dbReference type="NCBI Taxonomy" id="39682"/>
    <lineage>
        <taxon>Eukaryota</taxon>
        <taxon>Metazoa</taxon>
        <taxon>Chordata</taxon>
        <taxon>Craniata</taxon>
        <taxon>Vertebrata</taxon>
        <taxon>Euteleostomi</taxon>
        <taxon>Lepidosauria</taxon>
        <taxon>Squamata</taxon>
        <taxon>Bifurcata</taxon>
        <taxon>Unidentata</taxon>
        <taxon>Episquamata</taxon>
        <taxon>Toxicofera</taxon>
        <taxon>Serpentes</taxon>
        <taxon>Colubroidea</taxon>
        <taxon>Viperidae</taxon>
        <taxon>Crotalinae</taxon>
        <taxon>Trimeresurus</taxon>
    </lineage>
</organism>
<keyword id="KW-1203">Blood coagulation cascade inhibiting toxin</keyword>
<keyword id="KW-0903">Direct protein sequencing</keyword>
<keyword id="KW-1015">Disulfide bond</keyword>
<keyword id="KW-1199">Hemostasis impairing toxin</keyword>
<keyword id="KW-0959">Myotoxin</keyword>
<keyword id="KW-0964">Secreted</keyword>
<keyword id="KW-0732">Signal</keyword>
<keyword id="KW-0800">Toxin</keyword>
<protein>
    <recommendedName>
        <fullName evidence="6">Basic phospholipase A2 homolog CTs-K49a</fullName>
        <shortName>svPLA2 homolog</shortName>
    </recommendedName>
    <alternativeName>
        <fullName>PLA2-III</fullName>
    </alternativeName>
</protein>
<reference key="1">
    <citation type="journal article" date="2004" name="Biochem. J.">
        <title>Venom phospholipases A2 of bamboo viper (Trimeresurus stejnegeri): molecular characterization, geographic variations and evidence of multiple ancestries.</title>
        <authorList>
            <person name="Tsai I.-H."/>
            <person name="Wang Y.-M."/>
            <person name="Chen Y.-H."/>
            <person name="Tsai T.-S."/>
            <person name="Tu M.-C."/>
        </authorList>
    </citation>
    <scope>NUCLEOTIDE SEQUENCE [MRNA]</scope>
    <scope>PROTEIN SEQUENCE OF 17-39</scope>
    <scope>FUNCTION</scope>
    <scope>MASS SPECTROMETRY</scope>
    <scope>SUBCELLULAR LOCATION</scope>
    <source>
        <strain>Chinese</strain>
        <tissue>Venom</tissue>
        <tissue>Venom gland</tissue>
    </source>
</reference>
<reference key="2">
    <citation type="journal article" date="2003" name="J. Hubei Univ.">
        <title>Isolation and sequencing of five variants of phospholipase A2 from venom of snake Trimeresurus stejnegeri.</title>
        <authorList>
            <person name="Li S.-Y."/>
            <person name="Guo Z.-X."/>
            <person name="Yang Y.-Y."/>
            <person name="Wang W.-Y."/>
            <person name="Xiong Y.-L."/>
        </authorList>
    </citation>
    <scope>PROTEIN SEQUENCE OF 17-44</scope>
    <scope>SUBCELLULAR LOCATION</scope>
    <source>
        <tissue>Venom</tissue>
    </source>
</reference>
<comment type="function">
    <text evidence="1 4">Snake venom phospholipase A2 homolog that lacks catalytic activity (PubMed:12959640). It shows myotoxic and weak anticoagulant activities (PubMed:12959640). A model of myotoxic mechanism has been proposed: an apo Lys49-PLA2 is activated by the entrance of a hydrophobic molecule (e.g. fatty acid) at the hydrophobic channel of the protein leading to a reorientation of a monomer (By similarity). This reorientation causes a transition between 'inactive' to 'active' states, causing alignment of C-terminal and membrane-docking sites (MDoS) side-by-side and putting the membrane-disruption sites (MDiS) in the same plane, exposed to solvent and in a symmetric position for both monomers (By similarity). The MDoS region stabilizes the toxin on membrane by the interaction of charged residues with phospholipid head groups (By similarity). Subsequently, the MDiS region destabilizes the membrane with penetration of hydrophobic residues (By similarity). This insertion causes a disorganization of the membrane, allowing an uncontrolled influx of ions (i.e. calcium and sodium), and eventually triggering irreversible intracellular alterations and cell death (By similarity).</text>
</comment>
<comment type="subcellular location">
    <subcellularLocation>
        <location evidence="4">Secreted</location>
    </subcellularLocation>
</comment>
<comment type="tissue specificity">
    <text evidence="8">Expressed by the venom gland.</text>
</comment>
<comment type="mass spectrometry"/>
<comment type="miscellaneous">
    <text>Hemolytic and neurotoxic activities are not detected (Ref.2).</text>
</comment>
<comment type="similarity">
    <text evidence="7">Belongs to the phospholipase A2 family. Group II subfamily. K49 sub-subfamily.</text>
</comment>
<comment type="caution">
    <text evidence="7">Does not bind calcium as one of the calcium-binding sites is lost (Asp-&gt;Lys in position 64, which corresponds to 'Lys-49' in the current nomenclature).</text>
</comment>
<accession>Q6H3D5</accession>
<accession>P82894</accession>